<accession>P17491</accession>
<accession>Q8K471</accession>
<name>INHBB_RAT</name>
<sequence length="411" mass="45183">MDGLPGRALGAACLLLLAAGWLGPEAWGSPTPPPSPAAPPPPPPPGAPGGSQDTCTSCGGGGGGFRRPEELGRVDGDFLEAVKRHILSRLQLRGRPNITHAVPKAAMVTALRKLHAGKVREDGRVEIPHLDGHASPGADGQERVSEIISFAETDGLASSRVRLYFFVSNEGNQNLFVVQASLWLYLKLLPYVLEKGSRRKVRVKVYFQEQGHGDRWNVVEKKVDLKRSGWHTFPITEAIQALFERGERRLNLDVQCDSCQELAVVPVFVDPGEESHRPFVVVQARLGDSRHRIRKRGLECDGRTSLCCRQQFFIDFRLIGWNDWIIAPTGYYGNYCEGSCPAYLAGVPGSASSFHTAVVNQYRMRGLNPGPVNSCCIPTKLSSMSMLYFDDEYNIVKRDVPNMIVEECGCA</sequence>
<organism>
    <name type="scientific">Rattus norvegicus</name>
    <name type="common">Rat</name>
    <dbReference type="NCBI Taxonomy" id="10116"/>
    <lineage>
        <taxon>Eukaryota</taxon>
        <taxon>Metazoa</taxon>
        <taxon>Chordata</taxon>
        <taxon>Craniata</taxon>
        <taxon>Vertebrata</taxon>
        <taxon>Euteleostomi</taxon>
        <taxon>Mammalia</taxon>
        <taxon>Eutheria</taxon>
        <taxon>Euarchontoglires</taxon>
        <taxon>Glires</taxon>
        <taxon>Rodentia</taxon>
        <taxon>Myomorpha</taxon>
        <taxon>Muroidea</taxon>
        <taxon>Muridae</taxon>
        <taxon>Murinae</taxon>
        <taxon>Rattus</taxon>
    </lineage>
</organism>
<keyword id="KW-0165">Cleavage on pair of basic residues</keyword>
<keyword id="KW-1015">Disulfide bond</keyword>
<keyword id="KW-0325">Glycoprotein</keyword>
<keyword id="KW-0339">Growth factor</keyword>
<keyword id="KW-0372">Hormone</keyword>
<keyword id="KW-1185">Reference proteome</keyword>
<keyword id="KW-0964">Secreted</keyword>
<keyword id="KW-0732">Signal</keyword>
<evidence type="ECO:0000250" key="1"/>
<evidence type="ECO:0000250" key="2">
    <source>
        <dbReference type="UniProtKB" id="P05111"/>
    </source>
</evidence>
<evidence type="ECO:0000250" key="3">
    <source>
        <dbReference type="UniProtKB" id="P09529"/>
    </source>
</evidence>
<evidence type="ECO:0000250" key="4">
    <source>
        <dbReference type="UniProtKB" id="P17490"/>
    </source>
</evidence>
<evidence type="ECO:0000255" key="5"/>
<evidence type="ECO:0000256" key="6">
    <source>
        <dbReference type="SAM" id="MobiDB-lite"/>
    </source>
</evidence>
<evidence type="ECO:0000269" key="7">
    <source>
    </source>
</evidence>
<evidence type="ECO:0000305" key="8"/>
<dbReference type="EMBL" id="M32757">
    <property type="protein sequence ID" value="AAA41438.1"/>
    <property type="molecule type" value="Genomic_DNA"/>
</dbReference>
<dbReference type="EMBL" id="M32756">
    <property type="protein sequence ID" value="AAA41438.1"/>
    <property type="status" value="JOINED"/>
    <property type="molecule type" value="Genomic_DNA"/>
</dbReference>
<dbReference type="EMBL" id="AF478684">
    <property type="protein sequence ID" value="AAM46787.1"/>
    <property type="molecule type" value="mRNA"/>
</dbReference>
<dbReference type="PIR" id="B41398">
    <property type="entry name" value="B41398"/>
</dbReference>
<dbReference type="RefSeq" id="NP_542949.1">
    <property type="nucleotide sequence ID" value="NM_080771.3"/>
</dbReference>
<dbReference type="SMR" id="P17491"/>
<dbReference type="FunCoup" id="P17491">
    <property type="interactions" value="741"/>
</dbReference>
<dbReference type="STRING" id="10116.ENSRNOP00000071390"/>
<dbReference type="GlyCosmos" id="P17491">
    <property type="glycosylation" value="1 site, No reported glycans"/>
</dbReference>
<dbReference type="GlyGen" id="P17491">
    <property type="glycosylation" value="2 sites"/>
</dbReference>
<dbReference type="PhosphoSitePlus" id="P17491"/>
<dbReference type="PaxDb" id="10116-ENSRNOP00000065153"/>
<dbReference type="Ensembl" id="ENSRNOT00000086350.2">
    <property type="protein sequence ID" value="ENSRNOP00000071390.2"/>
    <property type="gene ID" value="ENSRNOG00000060237.2"/>
</dbReference>
<dbReference type="GeneID" id="25196"/>
<dbReference type="KEGG" id="rno:25196"/>
<dbReference type="AGR" id="RGD:2913"/>
<dbReference type="CTD" id="3625"/>
<dbReference type="RGD" id="2913">
    <property type="gene designation" value="Inhbb"/>
</dbReference>
<dbReference type="eggNOG" id="KOG3900">
    <property type="taxonomic scope" value="Eukaryota"/>
</dbReference>
<dbReference type="GeneTree" id="ENSGT00940000159862"/>
<dbReference type="InParanoid" id="P17491"/>
<dbReference type="OMA" id="RMDGDFL"/>
<dbReference type="OrthoDB" id="6516235at2759"/>
<dbReference type="PhylomeDB" id="P17491"/>
<dbReference type="TreeFam" id="TF351791"/>
<dbReference type="Reactome" id="R-RNO-1502540">
    <property type="pathway name" value="Signaling by Activin"/>
</dbReference>
<dbReference type="Reactome" id="R-RNO-209822">
    <property type="pathway name" value="Glycoprotein hormones"/>
</dbReference>
<dbReference type="Reactome" id="R-RNO-2473224">
    <property type="pathway name" value="Antagonism of Activin by Follistatin"/>
</dbReference>
<dbReference type="PRO" id="PR:P17491"/>
<dbReference type="Proteomes" id="UP000002494">
    <property type="component" value="Chromosome 13"/>
</dbReference>
<dbReference type="GO" id="GO:0071944">
    <property type="term" value="C:cell periphery"/>
    <property type="evidence" value="ECO:0000266"/>
    <property type="project" value="RGD"/>
</dbReference>
<dbReference type="GO" id="GO:0005615">
    <property type="term" value="C:extracellular space"/>
    <property type="evidence" value="ECO:0000314"/>
    <property type="project" value="RGD"/>
</dbReference>
<dbReference type="GO" id="GO:0048471">
    <property type="term" value="C:perinuclear region of cytoplasm"/>
    <property type="evidence" value="ECO:0000250"/>
    <property type="project" value="UniProtKB"/>
</dbReference>
<dbReference type="GO" id="GO:0005125">
    <property type="term" value="F:cytokine activity"/>
    <property type="evidence" value="ECO:0000318"/>
    <property type="project" value="GO_Central"/>
</dbReference>
<dbReference type="GO" id="GO:0008083">
    <property type="term" value="F:growth factor activity"/>
    <property type="evidence" value="ECO:0007669"/>
    <property type="project" value="UniProtKB-KW"/>
</dbReference>
<dbReference type="GO" id="GO:0005179">
    <property type="term" value="F:hormone activity"/>
    <property type="evidence" value="ECO:0007669"/>
    <property type="project" value="UniProtKB-KW"/>
</dbReference>
<dbReference type="GO" id="GO:0042803">
    <property type="term" value="F:protein homodimerization activity"/>
    <property type="evidence" value="ECO:0000250"/>
    <property type="project" value="UniProtKB"/>
</dbReference>
<dbReference type="GO" id="GO:0032924">
    <property type="term" value="P:activin receptor signaling pathway"/>
    <property type="evidence" value="ECO:0000250"/>
    <property type="project" value="UniProtKB"/>
</dbReference>
<dbReference type="GO" id="GO:0097190">
    <property type="term" value="P:apoptotic signaling pathway"/>
    <property type="evidence" value="ECO:0000266"/>
    <property type="project" value="RGD"/>
</dbReference>
<dbReference type="GO" id="GO:0071277">
    <property type="term" value="P:cellular response to calcium ion"/>
    <property type="evidence" value="ECO:0000270"/>
    <property type="project" value="RGD"/>
</dbReference>
<dbReference type="GO" id="GO:0071320">
    <property type="term" value="P:cellular response to cAMP"/>
    <property type="evidence" value="ECO:0000270"/>
    <property type="project" value="RGD"/>
</dbReference>
<dbReference type="GO" id="GO:0071397">
    <property type="term" value="P:cellular response to cholesterol"/>
    <property type="evidence" value="ECO:0000314"/>
    <property type="project" value="UniProtKB"/>
</dbReference>
<dbReference type="GO" id="GO:0032869">
    <property type="term" value="P:cellular response to insulin stimulus"/>
    <property type="evidence" value="ECO:0000250"/>
    <property type="project" value="UniProtKB"/>
</dbReference>
<dbReference type="GO" id="GO:0071347">
    <property type="term" value="P:cellular response to interleukin-1"/>
    <property type="evidence" value="ECO:0000270"/>
    <property type="project" value="RGD"/>
</dbReference>
<dbReference type="GO" id="GO:0044320">
    <property type="term" value="P:cellular response to leptin stimulus"/>
    <property type="evidence" value="ECO:0000266"/>
    <property type="project" value="RGD"/>
</dbReference>
<dbReference type="GO" id="GO:1904628">
    <property type="term" value="P:cellular response to phorbol 13-acetate 12-myristate"/>
    <property type="evidence" value="ECO:0000270"/>
    <property type="project" value="RGD"/>
</dbReference>
<dbReference type="GO" id="GO:0009267">
    <property type="term" value="P:cellular response to starvation"/>
    <property type="evidence" value="ECO:0000250"/>
    <property type="project" value="UniProtKB"/>
</dbReference>
<dbReference type="GO" id="GO:1904017">
    <property type="term" value="P:cellular response to Thyroglobulin triiodothyronine"/>
    <property type="evidence" value="ECO:0000270"/>
    <property type="project" value="RGD"/>
</dbReference>
<dbReference type="GO" id="GO:0097067">
    <property type="term" value="P:cellular response to thyroid hormone stimulus"/>
    <property type="evidence" value="ECO:0000270"/>
    <property type="project" value="RGD"/>
</dbReference>
<dbReference type="GO" id="GO:0045444">
    <property type="term" value="P:fat cell differentiation"/>
    <property type="evidence" value="ECO:0000250"/>
    <property type="project" value="UniProtKB"/>
</dbReference>
<dbReference type="GO" id="GO:0008585">
    <property type="term" value="P:female gonad development"/>
    <property type="evidence" value="ECO:0000270"/>
    <property type="project" value="RGD"/>
</dbReference>
<dbReference type="GO" id="GO:0008584">
    <property type="term" value="P:male gonad development"/>
    <property type="evidence" value="ECO:0000270"/>
    <property type="project" value="RGD"/>
</dbReference>
<dbReference type="GO" id="GO:0046882">
    <property type="term" value="P:negative regulation of follicle-stimulating hormone secretion"/>
    <property type="evidence" value="ECO:0000250"/>
    <property type="project" value="UniProtKB"/>
</dbReference>
<dbReference type="GO" id="GO:0032686">
    <property type="term" value="P:negative regulation of hepatocyte growth factor production"/>
    <property type="evidence" value="ECO:0000250"/>
    <property type="project" value="UniProtKB"/>
</dbReference>
<dbReference type="GO" id="GO:0046676">
    <property type="term" value="P:negative regulation of insulin secretion"/>
    <property type="evidence" value="ECO:0000250"/>
    <property type="project" value="UniProtKB"/>
</dbReference>
<dbReference type="GO" id="GO:0048599">
    <property type="term" value="P:oocyte development"/>
    <property type="evidence" value="ECO:0000266"/>
    <property type="project" value="RGD"/>
</dbReference>
<dbReference type="GO" id="GO:0021983">
    <property type="term" value="P:pituitary gland development"/>
    <property type="evidence" value="ECO:0000270"/>
    <property type="project" value="RGD"/>
</dbReference>
<dbReference type="GO" id="GO:2001235">
    <property type="term" value="P:positive regulation of apoptotic signaling pathway"/>
    <property type="evidence" value="ECO:0000266"/>
    <property type="project" value="RGD"/>
</dbReference>
<dbReference type="GO" id="GO:0046881">
    <property type="term" value="P:positive regulation of follicle-stimulating hormone secretion"/>
    <property type="evidence" value="ECO:0000250"/>
    <property type="project" value="UniProtKB"/>
</dbReference>
<dbReference type="GO" id="GO:0060279">
    <property type="term" value="P:positive regulation of ovulation"/>
    <property type="evidence" value="ECO:0000250"/>
    <property type="project" value="UniProtKB"/>
</dbReference>
<dbReference type="GO" id="GO:0034698">
    <property type="term" value="P:response to gonadotropin"/>
    <property type="evidence" value="ECO:0000270"/>
    <property type="project" value="RGD"/>
</dbReference>
<dbReference type="GO" id="GO:0017085">
    <property type="term" value="P:response to insecticide"/>
    <property type="evidence" value="ECO:0000270"/>
    <property type="project" value="RGD"/>
</dbReference>
<dbReference type="GO" id="GO:0009611">
    <property type="term" value="P:response to wounding"/>
    <property type="evidence" value="ECO:0000250"/>
    <property type="project" value="UniProtKB"/>
</dbReference>
<dbReference type="GO" id="GO:0072520">
    <property type="term" value="P:seminiferous tubule development"/>
    <property type="evidence" value="ECO:0000270"/>
    <property type="project" value="RGD"/>
</dbReference>
<dbReference type="GO" id="GO:0007283">
    <property type="term" value="P:spermatogenesis"/>
    <property type="evidence" value="ECO:0000270"/>
    <property type="project" value="RGD"/>
</dbReference>
<dbReference type="CDD" id="cd19405">
    <property type="entry name" value="TGF_beta_INHBB"/>
    <property type="match status" value="1"/>
</dbReference>
<dbReference type="FunFam" id="2.10.90.10:FF:000005">
    <property type="entry name" value="Inhibin beta A chain"/>
    <property type="match status" value="1"/>
</dbReference>
<dbReference type="FunFam" id="2.60.120.970:FF:000012">
    <property type="entry name" value="inhibin beta B chain"/>
    <property type="match status" value="1"/>
</dbReference>
<dbReference type="Gene3D" id="2.60.120.970">
    <property type="match status" value="1"/>
</dbReference>
<dbReference type="Gene3D" id="2.10.90.10">
    <property type="entry name" value="Cystine-knot cytokines"/>
    <property type="match status" value="1"/>
</dbReference>
<dbReference type="InterPro" id="IPR029034">
    <property type="entry name" value="Cystine-knot_cytokine"/>
</dbReference>
<dbReference type="InterPro" id="IPR000381">
    <property type="entry name" value="INHBB_C"/>
</dbReference>
<dbReference type="InterPro" id="IPR001839">
    <property type="entry name" value="TGF-b_C"/>
</dbReference>
<dbReference type="InterPro" id="IPR001111">
    <property type="entry name" value="TGF-b_propeptide"/>
</dbReference>
<dbReference type="InterPro" id="IPR015615">
    <property type="entry name" value="TGF-beta-rel"/>
</dbReference>
<dbReference type="InterPro" id="IPR017948">
    <property type="entry name" value="TGFb_CS"/>
</dbReference>
<dbReference type="PANTHER" id="PTHR11848:SF29">
    <property type="entry name" value="INHIBIN BETA B CHAIN"/>
    <property type="match status" value="1"/>
</dbReference>
<dbReference type="PANTHER" id="PTHR11848">
    <property type="entry name" value="TGF-BETA FAMILY"/>
    <property type="match status" value="1"/>
</dbReference>
<dbReference type="Pfam" id="PF00019">
    <property type="entry name" value="TGF_beta"/>
    <property type="match status" value="1"/>
</dbReference>
<dbReference type="Pfam" id="PF00688">
    <property type="entry name" value="TGFb_propeptide"/>
    <property type="match status" value="1"/>
</dbReference>
<dbReference type="PRINTS" id="PR00671">
    <property type="entry name" value="INHIBINBB"/>
</dbReference>
<dbReference type="SMART" id="SM00204">
    <property type="entry name" value="TGFB"/>
    <property type="match status" value="1"/>
</dbReference>
<dbReference type="SUPFAM" id="SSF57501">
    <property type="entry name" value="Cystine-knot cytokines"/>
    <property type="match status" value="1"/>
</dbReference>
<dbReference type="PROSITE" id="PS00250">
    <property type="entry name" value="TGF_BETA_1"/>
    <property type="match status" value="1"/>
</dbReference>
<dbReference type="PROSITE" id="PS51362">
    <property type="entry name" value="TGF_BETA_2"/>
    <property type="match status" value="1"/>
</dbReference>
<protein>
    <recommendedName>
        <fullName>Inhibin beta B chain</fullName>
    </recommendedName>
    <alternativeName>
        <fullName>Activin beta-B chain</fullName>
    </alternativeName>
</protein>
<reference key="1">
    <citation type="journal article" date="1989" name="Mol. Endocrinol.">
        <title>Analysis of the 5'-flanking regions of rat inhibin alpha- and beta-B-subunit genes suggests two different regulatory mechanisms.</title>
        <authorList>
            <person name="Feng Z.-M."/>
            <person name="Li Y.-P."/>
            <person name="Chen C.-L.C."/>
        </authorList>
    </citation>
    <scope>NUCLEOTIDE SEQUENCE OF 1-174</scope>
    <source>
        <tissue>Liver</tissue>
    </source>
</reference>
<reference key="2">
    <citation type="journal article" date="1994" name="Endocrinology">
        <title>Two messenger ribonucleic acids encoding the common beta B-chain of inhibin and activin have distinct 5'-initiation sites and are differentially regulated in rat granulosa cells.</title>
        <authorList>
            <person name="Dykema J.C."/>
            <person name="Mayo K.E."/>
        </authorList>
    </citation>
    <scope>NUCLEOTIDE SEQUENCE OF 1-7</scope>
    <source>
        <tissue>Granulocyte</tissue>
    </source>
</reference>
<reference key="3">
    <citation type="journal article" date="1987" name="Mol. Endocrinol.">
        <title>Complementary deoxyribonucleic acid (cDNA) cloning and DNA sequence analysis of rat ovarian inhibins.</title>
        <authorList>
            <person name="Esch F.S."/>
            <person name="Shimasaki S."/>
            <person name="Cooksey K."/>
            <person name="Mercado M."/>
            <person name="Mason A.J."/>
            <person name="Ying S.-Y."/>
            <person name="Ueno N."/>
            <person name="Ling N."/>
        </authorList>
    </citation>
    <scope>NUCLEOTIDE SEQUENCE OF 133-411</scope>
    <scope>VARIANT BETA-B20 HIS-270</scope>
    <source>
        <tissue>Ovary</tissue>
    </source>
</reference>
<reference key="4">
    <citation type="journal article" date="2003" name="Thyroid">
        <title>Activin betaB expression in rat experimental goiter and human thyroid tumors.</title>
        <authorList>
            <person name="Matsuo S.E."/>
            <person name="Ebina K.N."/>
            <person name="Kulcsar M.A."/>
            <person name="Friguglietti C.U."/>
            <person name="Kimura E.T."/>
        </authorList>
    </citation>
    <scope>NUCLEOTIDE SEQUENCE OF 158-266</scope>
    <source>
        <strain>Wistar</strain>
        <tissue>Thyroid</tissue>
    </source>
</reference>
<gene>
    <name type="primary">Inhbb</name>
</gene>
<comment type="function">
    <text evidence="3">Inhibins and activins inhibit and activate, respectively, the secretion of follitropin by the pituitary gland. Inhibins/activins are involved in regulating a number of diverse functions such as hypothalamic and pituitary hormone secretion, gonadal hormone secretion, germ cell development and maturation, erythroid differentiation, insulin secretion, nerve cell survival, embryonic axial development or bone growth, depending on their subunit composition. Inhibins appear to oppose the functions of activins.</text>
</comment>
<comment type="function">
    <text evidence="3">Activin B is a dimer of alpha and beta-B that plays a role in several essential biological processes including embryonic development, stem cell maintenance and differentiation, haematopoiesis, cell proliferation and wound healing. Signals through type I receptor ACVR1C, abundantly expressed in pancreatic beta cells, and type II receptors like ACVR2A. Upon ligand binding, these receptors phosphorylate intracellular signaling mediators SMAD2 and SMAD3, which form a complex with SMAD4, translocate to the nucleus, and regulate gene expression. Plays a crucial role in the induction of hepcidin by inflammation through activation of ACVR1C and subsequent phosphorylation of SMAD1/5/8 (By similarity). Regulates adipocyte lipid metabolism by decreasing non-esterified fatty acids and glycerol release and increases intracellular triglyceride content (By similarity). Stimulates wound healing by promoting cell migration and hair follicle regeneration through the JNK and ERK signaling pathways downstream of RHOA (By similarity).</text>
</comment>
<comment type="function">
    <text evidence="2 4">Inhibin B is a dimer of alpha and beta-B that plays a crucial role in the regulation of the reproductive system by inhibiting the secretion of follicle-stimulating hormone (FSH) from the anterior pituitary gland. Thereby, maintains reproductive homeostasis in both males and females. Acts as a more potent suppressor of FSH release than inhibin A (By similarity). Functions as competitive receptor antagonist binding activin type II receptors with high affinity in the presence of the TGF-beta type III coreceptor/TGFBR3L (By similarity).</text>
</comment>
<comment type="subunit">
    <text evidence="3">Dimeric, linked by one or more disulfide bonds. Inhibin B is a dimer of alpha and beta-B. Activin B is a homodimer of beta-B. Activin AB is a dimer of beta-A and beta-B. Interacts with FST and FSTL3.</text>
</comment>
<comment type="subcellular location">
    <subcellularLocation>
        <location evidence="1">Secreted</location>
    </subcellularLocation>
</comment>
<comment type="tissue specificity">
    <text>Alpha- and beta-B subunits are the predominant forms found in rat testis. Also expressed in ovary.</text>
</comment>
<comment type="induction">
    <text>Increased expression in methimazole-induced goiter.</text>
</comment>
<comment type="similarity">
    <text evidence="8">Belongs to the TGF-beta family.</text>
</comment>
<feature type="signal peptide" evidence="5">
    <location>
        <begin position="1"/>
        <end position="28"/>
    </location>
</feature>
<feature type="propeptide" id="PRO_0000033728" evidence="5">
    <location>
        <begin position="29"/>
        <end position="296"/>
    </location>
</feature>
<feature type="chain" id="PRO_0000033729" description="Inhibin beta B chain">
    <location>
        <begin position="297"/>
        <end position="411"/>
    </location>
</feature>
<feature type="region of interest" description="Disordered" evidence="6">
    <location>
        <begin position="27"/>
        <end position="69"/>
    </location>
</feature>
<feature type="compositionally biased region" description="Pro residues" evidence="6">
    <location>
        <begin position="30"/>
        <end position="47"/>
    </location>
</feature>
<feature type="glycosylation site" description="N-linked (GlcNAc...) asparagine" evidence="5">
    <location>
        <position position="97"/>
    </location>
</feature>
<feature type="disulfide bond" evidence="3">
    <location>
        <begin position="300"/>
        <end position="308"/>
    </location>
</feature>
<feature type="disulfide bond" evidence="3">
    <location>
        <begin position="307"/>
        <end position="376"/>
    </location>
</feature>
<feature type="disulfide bond" evidence="3">
    <location>
        <begin position="336"/>
        <end position="408"/>
    </location>
</feature>
<feature type="disulfide bond" evidence="3">
    <location>
        <begin position="340"/>
        <end position="410"/>
    </location>
</feature>
<feature type="disulfide bond" description="Interchain" evidence="3">
    <location>
        <position position="375"/>
    </location>
</feature>
<feature type="sequence variant" description="In beta-B20." evidence="7">
    <original>D</original>
    <variation>H</variation>
    <location>
        <position position="270"/>
    </location>
</feature>
<proteinExistence type="evidence at transcript level"/>